<reference evidence="5 6" key="1">
    <citation type="journal article" date="2001" name="J. Bacteriol.">
        <title>nag genes of Ralstonia (formerly Pseudomonas) sp. strain U2 encoding enzymes for gentisate catabolism.</title>
        <authorList>
            <person name="Zhou N.Y."/>
            <person name="Fuenmayor S.L."/>
            <person name="Williams P.A."/>
        </authorList>
    </citation>
    <scope>NUCLEOTIDE SEQUENCE [GENOMIC DNA]</scope>
    <scope>FUNCTION</scope>
    <scope>CATALYTIC ACTIVITY</scope>
    <scope>PATHWAY</scope>
    <source>
        <strain evidence="6">U2</strain>
    </source>
</reference>
<reference evidence="5 7" key="2">
    <citation type="journal article" date="2008" name="J. Mol. Biol.">
        <title>Structure of bacterial glutathione-S-transferase maleyl pyruvate isomerase and implications for mechanism of isomerisation.</title>
        <authorList>
            <person name="Marsh M."/>
            <person name="Shoemark D.K."/>
            <person name="Jacob A."/>
            <person name="Robinson C."/>
            <person name="Cahill B."/>
            <person name="Zhou N.Y."/>
            <person name="Williams P.A."/>
            <person name="Hadfield A.T."/>
        </authorList>
    </citation>
    <scope>X-RAY CRYSTALLOGRAPHY (1.30 ANGSTROMS) IN COMPLEX WITH GLUTATHIONE</scope>
    <scope>COFACTOR</scope>
    <scope>SUBUNIT</scope>
    <source>
        <strain evidence="3">U2</strain>
    </source>
</reference>
<dbReference type="EC" id="5.2.1.4" evidence="2"/>
<dbReference type="EMBL" id="AF036940">
    <property type="protein sequence ID" value="AAD12621.1"/>
    <property type="molecule type" value="Genomic_DNA"/>
</dbReference>
<dbReference type="PDB" id="2JL4">
    <property type="method" value="X-ray"/>
    <property type="resolution" value="2.30 A"/>
    <property type="chains" value="A/B=1-212"/>
</dbReference>
<dbReference type="PDB" id="2V6K">
    <property type="method" value="X-ray"/>
    <property type="resolution" value="1.30 A"/>
    <property type="chains" value="A/B=1-212"/>
</dbReference>
<dbReference type="PDBsum" id="2JL4"/>
<dbReference type="PDBsum" id="2V6K"/>
<dbReference type="SMR" id="O86043"/>
<dbReference type="KEGG" id="ag:AAD12621"/>
<dbReference type="BioCyc" id="MetaCyc:MONOMER-14770"/>
<dbReference type="UniPathway" id="UPA00082"/>
<dbReference type="EvolutionaryTrace" id="O86043"/>
<dbReference type="GO" id="GO:0005737">
    <property type="term" value="C:cytoplasm"/>
    <property type="evidence" value="ECO:0007669"/>
    <property type="project" value="InterPro"/>
</dbReference>
<dbReference type="GO" id="GO:0004364">
    <property type="term" value="F:glutathione transferase activity"/>
    <property type="evidence" value="ECO:0007669"/>
    <property type="project" value="TreeGrafter"/>
</dbReference>
<dbReference type="GO" id="GO:0016034">
    <property type="term" value="F:maleylacetoacetate isomerase activity"/>
    <property type="evidence" value="ECO:0007669"/>
    <property type="project" value="TreeGrafter"/>
</dbReference>
<dbReference type="GO" id="GO:0050077">
    <property type="term" value="F:maleylpyruvate isomerase activity"/>
    <property type="evidence" value="ECO:0000314"/>
    <property type="project" value="UniProtKB"/>
</dbReference>
<dbReference type="GO" id="GO:0006749">
    <property type="term" value="P:glutathione metabolic process"/>
    <property type="evidence" value="ECO:0007669"/>
    <property type="project" value="TreeGrafter"/>
</dbReference>
<dbReference type="GO" id="GO:0006559">
    <property type="term" value="P:L-phenylalanine catabolic process"/>
    <property type="evidence" value="ECO:0007669"/>
    <property type="project" value="TreeGrafter"/>
</dbReference>
<dbReference type="GO" id="GO:1901170">
    <property type="term" value="P:naphthalene catabolic process"/>
    <property type="evidence" value="ECO:0000314"/>
    <property type="project" value="UniProtKB"/>
</dbReference>
<dbReference type="CDD" id="cd03191">
    <property type="entry name" value="GST_C_Zeta"/>
    <property type="match status" value="1"/>
</dbReference>
<dbReference type="CDD" id="cd03042">
    <property type="entry name" value="GST_N_Zeta"/>
    <property type="match status" value="1"/>
</dbReference>
<dbReference type="Gene3D" id="1.20.1050.10">
    <property type="match status" value="1"/>
</dbReference>
<dbReference type="Gene3D" id="3.40.30.10">
    <property type="entry name" value="Glutaredoxin"/>
    <property type="match status" value="1"/>
</dbReference>
<dbReference type="InterPro" id="IPR010987">
    <property type="entry name" value="Glutathione-S-Trfase_C-like"/>
</dbReference>
<dbReference type="InterPro" id="IPR036282">
    <property type="entry name" value="Glutathione-S-Trfase_C_sf"/>
</dbReference>
<dbReference type="InterPro" id="IPR040079">
    <property type="entry name" value="Glutathione_S-Trfase"/>
</dbReference>
<dbReference type="InterPro" id="IPR004045">
    <property type="entry name" value="Glutathione_S-Trfase_N"/>
</dbReference>
<dbReference type="InterPro" id="IPR005955">
    <property type="entry name" value="GST_Zeta"/>
</dbReference>
<dbReference type="InterPro" id="IPR034330">
    <property type="entry name" value="GST_Zeta_C"/>
</dbReference>
<dbReference type="InterPro" id="IPR034333">
    <property type="entry name" value="GST_Zeta_N"/>
</dbReference>
<dbReference type="InterPro" id="IPR036249">
    <property type="entry name" value="Thioredoxin-like_sf"/>
</dbReference>
<dbReference type="NCBIfam" id="TIGR01262">
    <property type="entry name" value="maiA"/>
    <property type="match status" value="1"/>
</dbReference>
<dbReference type="PANTHER" id="PTHR42673:SF21">
    <property type="entry name" value="GLUTATHIONE S-TRANSFERASE YFCF"/>
    <property type="match status" value="1"/>
</dbReference>
<dbReference type="PANTHER" id="PTHR42673">
    <property type="entry name" value="MALEYLACETOACETATE ISOMERASE"/>
    <property type="match status" value="1"/>
</dbReference>
<dbReference type="Pfam" id="PF13410">
    <property type="entry name" value="GST_C_2"/>
    <property type="match status" value="1"/>
</dbReference>
<dbReference type="Pfam" id="PF13417">
    <property type="entry name" value="GST_N_3"/>
    <property type="match status" value="1"/>
</dbReference>
<dbReference type="SFLD" id="SFLDS00019">
    <property type="entry name" value="Glutathione_Transferase_(cytos"/>
    <property type="match status" value="1"/>
</dbReference>
<dbReference type="SFLD" id="SFLDG00358">
    <property type="entry name" value="Main_(cytGST)"/>
    <property type="match status" value="1"/>
</dbReference>
<dbReference type="SUPFAM" id="SSF47616">
    <property type="entry name" value="GST C-terminal domain-like"/>
    <property type="match status" value="1"/>
</dbReference>
<dbReference type="SUPFAM" id="SSF52833">
    <property type="entry name" value="Thioredoxin-like"/>
    <property type="match status" value="1"/>
</dbReference>
<dbReference type="PROSITE" id="PS50405">
    <property type="entry name" value="GST_CTER"/>
    <property type="match status" value="1"/>
</dbReference>
<dbReference type="PROSITE" id="PS50404">
    <property type="entry name" value="GST_NTER"/>
    <property type="match status" value="1"/>
</dbReference>
<organism>
    <name type="scientific">Ralstonia sp</name>
    <dbReference type="NCBI Taxonomy" id="54061"/>
    <lineage>
        <taxon>Bacteria</taxon>
        <taxon>Pseudomonadati</taxon>
        <taxon>Pseudomonadota</taxon>
        <taxon>Betaproteobacteria</taxon>
        <taxon>Burkholderiales</taxon>
        <taxon>Burkholderiaceae</taxon>
        <taxon>Ralstonia</taxon>
    </lineage>
</organism>
<evidence type="ECO:0000255" key="1"/>
<evidence type="ECO:0000269" key="2">
    <source>
    </source>
</evidence>
<evidence type="ECO:0000269" key="3">
    <source>
    </source>
</evidence>
<evidence type="ECO:0000303" key="4">
    <source>
    </source>
</evidence>
<evidence type="ECO:0000305" key="5"/>
<evidence type="ECO:0000312" key="6">
    <source>
        <dbReference type="EMBL" id="AAD12621.1"/>
    </source>
</evidence>
<evidence type="ECO:0000312" key="7">
    <source>
        <dbReference type="PDB" id="2JL4"/>
    </source>
</evidence>
<evidence type="ECO:0007829" key="8">
    <source>
        <dbReference type="PDB" id="2V6K"/>
    </source>
</evidence>
<sequence length="212" mass="23505">MKLYNFWRSGTSHRLRIALNLKGVPYEYLAVHLGKEEHLKDAFKALNPQQLVPALDTGAQVLIQSPAIIEWLEEQYPTPALLPADADGRQRVRALAAIVGCDIHPINNRRILEYLRKTFGADEAAINAWCGTWISAGFDAYEALLAVDPKRGRYSFGDTPTLADCYLVPQVESARRFQVDLTPYPLIRAVDAACGELDAFRRAAPAAQPDSA</sequence>
<keyword id="KW-0002">3D-structure</keyword>
<keyword id="KW-0058">Aromatic hydrocarbons catabolism</keyword>
<keyword id="KW-0413">Isomerase</keyword>
<keyword id="KW-0614">Plasmid</keyword>
<keyword id="KW-0670">Pyruvate</keyword>
<name>NAGL_RALSP</name>
<gene>
    <name evidence="6" type="primary">nagL</name>
</gene>
<feature type="chain" id="PRO_0000421469" description="Maleylpyruvate isomerase">
    <location>
        <begin position="1"/>
        <end position="212"/>
    </location>
</feature>
<feature type="domain" description="GST N-terminal" evidence="1">
    <location>
        <begin position="1"/>
        <end position="80"/>
    </location>
</feature>
<feature type="domain" description="GST C-terminal" evidence="1">
    <location>
        <begin position="85"/>
        <end position="212"/>
    </location>
</feature>
<feature type="binding site" evidence="3">
    <location>
        <begin position="9"/>
        <end position="11"/>
    </location>
    <ligand>
        <name>glutathione</name>
        <dbReference type="ChEBI" id="CHEBI:57925"/>
    </ligand>
</feature>
<feature type="binding site" evidence="3">
    <location>
        <position position="38"/>
    </location>
    <ligand>
        <name>glutathione</name>
        <dbReference type="ChEBI" id="CHEBI:57925"/>
    </ligand>
</feature>
<feature type="binding site" evidence="3">
    <location>
        <position position="52"/>
    </location>
    <ligand>
        <name>glutathione</name>
        <dbReference type="ChEBI" id="CHEBI:57925"/>
    </ligand>
</feature>
<feature type="binding site" evidence="3">
    <location>
        <begin position="64"/>
        <end position="65"/>
    </location>
    <ligand>
        <name>glutathione</name>
        <dbReference type="ChEBI" id="CHEBI:57925"/>
    </ligand>
</feature>
<feature type="binding site" evidence="3">
    <location>
        <begin position="102"/>
        <end position="104"/>
    </location>
    <ligand>
        <name>glutathione</name>
        <dbReference type="ChEBI" id="CHEBI:57925"/>
    </ligand>
</feature>
<feature type="binding site" evidence="3">
    <location>
        <begin position="108"/>
        <end position="110"/>
    </location>
    <ligand>
        <name>glutathione</name>
        <dbReference type="ChEBI" id="CHEBI:57925"/>
    </ligand>
</feature>
<feature type="binding site" evidence="3">
    <location>
        <position position="176"/>
    </location>
    <ligand>
        <name>glutathione</name>
        <dbReference type="ChEBI" id="CHEBI:57925"/>
    </ligand>
</feature>
<feature type="strand" evidence="8">
    <location>
        <begin position="2"/>
        <end position="5"/>
    </location>
</feature>
<feature type="helix" evidence="8">
    <location>
        <begin position="10"/>
        <end position="22"/>
    </location>
</feature>
<feature type="strand" evidence="8">
    <location>
        <begin position="27"/>
        <end position="30"/>
    </location>
</feature>
<feature type="turn" evidence="8">
    <location>
        <begin position="33"/>
        <end position="36"/>
    </location>
</feature>
<feature type="helix" evidence="8">
    <location>
        <begin position="37"/>
        <end position="39"/>
    </location>
</feature>
<feature type="helix" evidence="8">
    <location>
        <begin position="41"/>
        <end position="46"/>
    </location>
</feature>
<feature type="strand" evidence="8">
    <location>
        <begin position="54"/>
        <end position="56"/>
    </location>
</feature>
<feature type="strand" evidence="8">
    <location>
        <begin position="61"/>
        <end position="63"/>
    </location>
</feature>
<feature type="helix" evidence="8">
    <location>
        <begin position="65"/>
        <end position="75"/>
    </location>
</feature>
<feature type="helix" evidence="8">
    <location>
        <begin position="86"/>
        <end position="102"/>
    </location>
</feature>
<feature type="helix" evidence="8">
    <location>
        <begin position="104"/>
        <end position="107"/>
    </location>
</feature>
<feature type="helix" evidence="8">
    <location>
        <begin position="109"/>
        <end position="119"/>
    </location>
</feature>
<feature type="helix" evidence="8">
    <location>
        <begin position="123"/>
        <end position="147"/>
    </location>
</feature>
<feature type="strand" evidence="8">
    <location>
        <begin position="153"/>
        <end position="156"/>
    </location>
</feature>
<feature type="helix" evidence="8">
    <location>
        <begin position="162"/>
        <end position="176"/>
    </location>
</feature>
<feature type="helix" evidence="8">
    <location>
        <begin position="185"/>
        <end position="194"/>
    </location>
</feature>
<feature type="helix" evidence="8">
    <location>
        <begin position="198"/>
        <end position="203"/>
    </location>
</feature>
<feature type="helix" evidence="8">
    <location>
        <begin position="205"/>
        <end position="207"/>
    </location>
</feature>
<protein>
    <recommendedName>
        <fullName evidence="4 6">Maleylpyruvate isomerase</fullName>
        <shortName evidence="4">MPI</shortName>
        <ecNumber evidence="2">5.2.1.4</ecNumber>
    </recommendedName>
    <alternativeName>
        <fullName>Naphthalene degradation protein L</fullName>
    </alternativeName>
</protein>
<proteinExistence type="evidence at protein level"/>
<accession>O86043</accession>
<geneLocation type="plasmid" evidence="6">
    <name>pWWU2</name>
</geneLocation>
<comment type="function">
    <text evidence="2">Catalyzes the GSH-dependent isomerization of maleylpyruvate to fumarylpyruvate which is subsequently processed by NagK to form pyruvate and fumarate.</text>
</comment>
<comment type="catalytic activity">
    <reaction evidence="2">
        <text>3-maleylpyruvate = 3-fumarylpyruvate</text>
        <dbReference type="Rhea" id="RHEA:17393"/>
        <dbReference type="ChEBI" id="CHEBI:16727"/>
        <dbReference type="ChEBI" id="CHEBI:16854"/>
        <dbReference type="EC" id="5.2.1.4"/>
    </reaction>
</comment>
<comment type="cofactor">
    <cofactor evidence="3">
        <name>glutathione</name>
        <dbReference type="ChEBI" id="CHEBI:57925"/>
    </cofactor>
</comment>
<comment type="pathway">
    <text evidence="2">Aromatic compound metabolism; naphthalene degradation.</text>
</comment>
<comment type="subunit">
    <text evidence="3">Homodimer.</text>
</comment>
<comment type="similarity">
    <text evidence="1">Belongs to the GST superfamily. Zeta family.</text>
</comment>